<proteinExistence type="inferred from homology"/>
<name>RL14_MAGMM</name>
<sequence length="122" mass="13306">MIQVESRLEVADNSGAKKVQCIKVIGGSKRRYARVGDVIIVAVKAALPRGKVKKGEVARAVVVRTKKEISRPDGSLIRFDKNAAVLINKAGEPVGTRIFGPVTRELRARNYMKIISLAPEVL</sequence>
<comment type="function">
    <text evidence="1">Binds to 23S rRNA. Forms part of two intersubunit bridges in the 70S ribosome.</text>
</comment>
<comment type="subunit">
    <text evidence="1">Part of the 50S ribosomal subunit. Forms a cluster with proteins L3 and L19. In the 70S ribosome, L14 and L19 interact and together make contacts with the 16S rRNA in bridges B5 and B8.</text>
</comment>
<comment type="similarity">
    <text evidence="1">Belongs to the universal ribosomal protein uL14 family.</text>
</comment>
<gene>
    <name evidence="1" type="primary">rplN</name>
    <name type="ordered locus">Mmc1_0857</name>
</gene>
<protein>
    <recommendedName>
        <fullName evidence="1">Large ribosomal subunit protein uL14</fullName>
    </recommendedName>
    <alternativeName>
        <fullName evidence="2">50S ribosomal protein L14</fullName>
    </alternativeName>
</protein>
<accession>A0L5Y3</accession>
<evidence type="ECO:0000255" key="1">
    <source>
        <dbReference type="HAMAP-Rule" id="MF_01367"/>
    </source>
</evidence>
<evidence type="ECO:0000305" key="2"/>
<dbReference type="EMBL" id="CP000471">
    <property type="protein sequence ID" value="ABK43376.1"/>
    <property type="molecule type" value="Genomic_DNA"/>
</dbReference>
<dbReference type="RefSeq" id="WP_011712535.1">
    <property type="nucleotide sequence ID" value="NC_008576.1"/>
</dbReference>
<dbReference type="SMR" id="A0L5Y3"/>
<dbReference type="STRING" id="156889.Mmc1_0857"/>
<dbReference type="KEGG" id="mgm:Mmc1_0857"/>
<dbReference type="eggNOG" id="COG0093">
    <property type="taxonomic scope" value="Bacteria"/>
</dbReference>
<dbReference type="HOGENOM" id="CLU_095071_2_1_5"/>
<dbReference type="OrthoDB" id="9806379at2"/>
<dbReference type="Proteomes" id="UP000002586">
    <property type="component" value="Chromosome"/>
</dbReference>
<dbReference type="GO" id="GO:0022625">
    <property type="term" value="C:cytosolic large ribosomal subunit"/>
    <property type="evidence" value="ECO:0007669"/>
    <property type="project" value="TreeGrafter"/>
</dbReference>
<dbReference type="GO" id="GO:0070180">
    <property type="term" value="F:large ribosomal subunit rRNA binding"/>
    <property type="evidence" value="ECO:0007669"/>
    <property type="project" value="TreeGrafter"/>
</dbReference>
<dbReference type="GO" id="GO:0003735">
    <property type="term" value="F:structural constituent of ribosome"/>
    <property type="evidence" value="ECO:0007669"/>
    <property type="project" value="InterPro"/>
</dbReference>
<dbReference type="GO" id="GO:0006412">
    <property type="term" value="P:translation"/>
    <property type="evidence" value="ECO:0007669"/>
    <property type="project" value="UniProtKB-UniRule"/>
</dbReference>
<dbReference type="CDD" id="cd00337">
    <property type="entry name" value="Ribosomal_uL14"/>
    <property type="match status" value="1"/>
</dbReference>
<dbReference type="FunFam" id="2.40.150.20:FF:000001">
    <property type="entry name" value="50S ribosomal protein L14"/>
    <property type="match status" value="1"/>
</dbReference>
<dbReference type="Gene3D" id="2.40.150.20">
    <property type="entry name" value="Ribosomal protein L14"/>
    <property type="match status" value="1"/>
</dbReference>
<dbReference type="HAMAP" id="MF_01367">
    <property type="entry name" value="Ribosomal_uL14"/>
    <property type="match status" value="1"/>
</dbReference>
<dbReference type="InterPro" id="IPR000218">
    <property type="entry name" value="Ribosomal_uL14"/>
</dbReference>
<dbReference type="InterPro" id="IPR005745">
    <property type="entry name" value="Ribosomal_uL14_bac-type"/>
</dbReference>
<dbReference type="InterPro" id="IPR019972">
    <property type="entry name" value="Ribosomal_uL14_CS"/>
</dbReference>
<dbReference type="InterPro" id="IPR036853">
    <property type="entry name" value="Ribosomal_uL14_sf"/>
</dbReference>
<dbReference type="NCBIfam" id="TIGR01067">
    <property type="entry name" value="rplN_bact"/>
    <property type="match status" value="1"/>
</dbReference>
<dbReference type="PANTHER" id="PTHR11761">
    <property type="entry name" value="50S/60S RIBOSOMAL PROTEIN L14/L23"/>
    <property type="match status" value="1"/>
</dbReference>
<dbReference type="PANTHER" id="PTHR11761:SF3">
    <property type="entry name" value="LARGE RIBOSOMAL SUBUNIT PROTEIN UL14M"/>
    <property type="match status" value="1"/>
</dbReference>
<dbReference type="Pfam" id="PF00238">
    <property type="entry name" value="Ribosomal_L14"/>
    <property type="match status" value="1"/>
</dbReference>
<dbReference type="SMART" id="SM01374">
    <property type="entry name" value="Ribosomal_L14"/>
    <property type="match status" value="1"/>
</dbReference>
<dbReference type="SUPFAM" id="SSF50193">
    <property type="entry name" value="Ribosomal protein L14"/>
    <property type="match status" value="1"/>
</dbReference>
<dbReference type="PROSITE" id="PS00049">
    <property type="entry name" value="RIBOSOMAL_L14"/>
    <property type="match status" value="1"/>
</dbReference>
<organism>
    <name type="scientific">Magnetococcus marinus (strain ATCC BAA-1437 / JCM 17883 / MC-1)</name>
    <dbReference type="NCBI Taxonomy" id="156889"/>
    <lineage>
        <taxon>Bacteria</taxon>
        <taxon>Pseudomonadati</taxon>
        <taxon>Pseudomonadota</taxon>
        <taxon>Alphaproteobacteria</taxon>
        <taxon>Magnetococcales</taxon>
        <taxon>Magnetococcaceae</taxon>
        <taxon>Magnetococcus</taxon>
    </lineage>
</organism>
<feature type="chain" id="PRO_1000055624" description="Large ribosomal subunit protein uL14">
    <location>
        <begin position="1"/>
        <end position="122"/>
    </location>
</feature>
<keyword id="KW-1185">Reference proteome</keyword>
<keyword id="KW-0687">Ribonucleoprotein</keyword>
<keyword id="KW-0689">Ribosomal protein</keyword>
<keyword id="KW-0694">RNA-binding</keyword>
<keyword id="KW-0699">rRNA-binding</keyword>
<reference key="1">
    <citation type="journal article" date="2009" name="Appl. Environ. Microbiol.">
        <title>Complete genome sequence of the chemolithoautotrophic marine magnetotactic coccus strain MC-1.</title>
        <authorList>
            <person name="Schubbe S."/>
            <person name="Williams T.J."/>
            <person name="Xie G."/>
            <person name="Kiss H.E."/>
            <person name="Brettin T.S."/>
            <person name="Martinez D."/>
            <person name="Ross C.A."/>
            <person name="Schuler D."/>
            <person name="Cox B.L."/>
            <person name="Nealson K.H."/>
            <person name="Bazylinski D.A."/>
        </authorList>
    </citation>
    <scope>NUCLEOTIDE SEQUENCE [LARGE SCALE GENOMIC DNA]</scope>
    <source>
        <strain>ATCC BAA-1437 / JCM 17883 / MC-1</strain>
    </source>
</reference>